<name>PSBH_TRIEI</name>
<evidence type="ECO:0000255" key="1">
    <source>
        <dbReference type="HAMAP-Rule" id="MF_00752"/>
    </source>
</evidence>
<organism>
    <name type="scientific">Trichodesmium erythraeum (strain IMS101)</name>
    <dbReference type="NCBI Taxonomy" id="203124"/>
    <lineage>
        <taxon>Bacteria</taxon>
        <taxon>Bacillati</taxon>
        <taxon>Cyanobacteriota</taxon>
        <taxon>Cyanophyceae</taxon>
        <taxon>Oscillatoriophycideae</taxon>
        <taxon>Oscillatoriales</taxon>
        <taxon>Microcoleaceae</taxon>
        <taxon>Trichodesmium</taxon>
    </lineage>
</organism>
<gene>
    <name evidence="1" type="primary">psbH</name>
    <name type="ordered locus">Tery_2868</name>
</gene>
<protein>
    <recommendedName>
        <fullName evidence="1">Photosystem II reaction center protein H</fullName>
        <shortName evidence="1">PSII-H</shortName>
    </recommendedName>
</protein>
<reference key="1">
    <citation type="journal article" date="2015" name="Proc. Natl. Acad. Sci. U.S.A.">
        <title>Trichodesmium genome maintains abundant, widespread noncoding DNA in situ, despite oligotrophic lifestyle.</title>
        <authorList>
            <person name="Walworth N."/>
            <person name="Pfreundt U."/>
            <person name="Nelson W.C."/>
            <person name="Mincer T."/>
            <person name="Heidelberg J.F."/>
            <person name="Fu F."/>
            <person name="Waterbury J.B."/>
            <person name="Glavina del Rio T."/>
            <person name="Goodwin L."/>
            <person name="Kyrpides N.C."/>
            <person name="Land M.L."/>
            <person name="Woyke T."/>
            <person name="Hutchins D.A."/>
            <person name="Hess W.R."/>
            <person name="Webb E.A."/>
        </authorList>
    </citation>
    <scope>NUCLEOTIDE SEQUENCE [LARGE SCALE GENOMIC DNA]</scope>
    <source>
        <strain>IMS101</strain>
    </source>
</reference>
<keyword id="KW-0472">Membrane</keyword>
<keyword id="KW-0602">Photosynthesis</keyword>
<keyword id="KW-0604">Photosystem II</keyword>
<keyword id="KW-0793">Thylakoid</keyword>
<keyword id="KW-0812">Transmembrane</keyword>
<keyword id="KW-1133">Transmembrane helix</keyword>
<feature type="chain" id="PRO_1000046600" description="Photosystem II reaction center protein H">
    <location>
        <begin position="1"/>
        <end position="67"/>
    </location>
</feature>
<feature type="transmembrane region" description="Helical" evidence="1">
    <location>
        <begin position="29"/>
        <end position="49"/>
    </location>
</feature>
<dbReference type="EMBL" id="CP000393">
    <property type="protein sequence ID" value="ABG52041.1"/>
    <property type="molecule type" value="Genomic_DNA"/>
</dbReference>
<dbReference type="RefSeq" id="WP_011612400.1">
    <property type="nucleotide sequence ID" value="NC_008312.1"/>
</dbReference>
<dbReference type="SMR" id="Q110N3"/>
<dbReference type="STRING" id="203124.Tery_2868"/>
<dbReference type="KEGG" id="ter:Tery_2868"/>
<dbReference type="eggNOG" id="ENOG50332MV">
    <property type="taxonomic scope" value="Bacteria"/>
</dbReference>
<dbReference type="HOGENOM" id="CLU_190203_0_0_3"/>
<dbReference type="OrthoDB" id="427121at2"/>
<dbReference type="GO" id="GO:0009523">
    <property type="term" value="C:photosystem II"/>
    <property type="evidence" value="ECO:0007669"/>
    <property type="project" value="UniProtKB-KW"/>
</dbReference>
<dbReference type="GO" id="GO:0031676">
    <property type="term" value="C:plasma membrane-derived thylakoid membrane"/>
    <property type="evidence" value="ECO:0007669"/>
    <property type="project" value="UniProtKB-SubCell"/>
</dbReference>
<dbReference type="GO" id="GO:0042301">
    <property type="term" value="F:phosphate ion binding"/>
    <property type="evidence" value="ECO:0007669"/>
    <property type="project" value="InterPro"/>
</dbReference>
<dbReference type="GO" id="GO:0015979">
    <property type="term" value="P:photosynthesis"/>
    <property type="evidence" value="ECO:0007669"/>
    <property type="project" value="UniProtKB-UniRule"/>
</dbReference>
<dbReference type="GO" id="GO:0050821">
    <property type="term" value="P:protein stabilization"/>
    <property type="evidence" value="ECO:0007669"/>
    <property type="project" value="InterPro"/>
</dbReference>
<dbReference type="Gene3D" id="1.20.5.880">
    <property type="entry name" value="Photosystem II reaction center protein H"/>
    <property type="match status" value="1"/>
</dbReference>
<dbReference type="HAMAP" id="MF_00752">
    <property type="entry name" value="PSII_PsbH"/>
    <property type="match status" value="1"/>
</dbReference>
<dbReference type="InterPro" id="IPR001056">
    <property type="entry name" value="PSII_PsbH"/>
</dbReference>
<dbReference type="InterPro" id="IPR036863">
    <property type="entry name" value="PSII_PsbH_sf"/>
</dbReference>
<dbReference type="NCBIfam" id="NF002728">
    <property type="entry name" value="PRK02624.1"/>
    <property type="match status" value="1"/>
</dbReference>
<dbReference type="PANTHER" id="PTHR34469">
    <property type="entry name" value="PHOTOSYSTEM II REACTION CENTER PROTEIN H"/>
    <property type="match status" value="1"/>
</dbReference>
<dbReference type="PANTHER" id="PTHR34469:SF4">
    <property type="entry name" value="PHOTOSYSTEM II REACTION CENTER PROTEIN H"/>
    <property type="match status" value="1"/>
</dbReference>
<dbReference type="Pfam" id="PF00737">
    <property type="entry name" value="PsbH"/>
    <property type="match status" value="1"/>
</dbReference>
<dbReference type="SUPFAM" id="SSF161025">
    <property type="entry name" value="Photosystem II 10 kDa phosphoprotein PsbH"/>
    <property type="match status" value="1"/>
</dbReference>
<proteinExistence type="inferred from homology"/>
<accession>Q110N3</accession>
<comment type="function">
    <text evidence="1">One of the components of the core complex of photosystem II (PSII), required for its stability and/or assembly. PSII is a light-driven water:plastoquinone oxidoreductase that uses light energy to abstract electrons from H(2)O, generating O(2) and a proton gradient subsequently used for ATP formation. It consists of a core antenna complex that captures photons, and an electron transfer chain that converts photonic excitation into a charge separation.</text>
</comment>
<comment type="subunit">
    <text evidence="1">PSII is composed of 1 copy each of membrane proteins PsbA, PsbB, PsbC, PsbD, PsbE, PsbF, PsbH, PsbI, PsbJ, PsbK, PsbL, PsbM, PsbT, PsbX, PsbY, PsbZ, Psb30/Ycf12, peripheral proteins PsbO, CyanoQ (PsbQ), PsbU, PsbV and a large number of cofactors. It forms dimeric complexes.</text>
</comment>
<comment type="subcellular location">
    <subcellularLocation>
        <location evidence="1">Cellular thylakoid membrane</location>
        <topology evidence="1">Single-pass membrane protein</topology>
    </subcellularLocation>
</comment>
<comment type="similarity">
    <text evidence="1">Belongs to the PsbH family.</text>
</comment>
<sequence>MSQRTGLGDILKPLNSEYGKVSPGWGTTWVMAVFIGLFFVFLLIILQIYNSSLLLENVDVDWANLTK</sequence>